<dbReference type="EMBL" id="CP000488">
    <property type="protein sequence ID" value="ABL02700.1"/>
    <property type="molecule type" value="Genomic_DNA"/>
</dbReference>
<dbReference type="RefSeq" id="WP_011738325.1">
    <property type="nucleotide sequence ID" value="NC_008610.1"/>
</dbReference>
<dbReference type="SMR" id="A1AXP3"/>
<dbReference type="STRING" id="413404.Rmag_0994"/>
<dbReference type="KEGG" id="rma:Rmag_0994"/>
<dbReference type="eggNOG" id="COG0227">
    <property type="taxonomic scope" value="Bacteria"/>
</dbReference>
<dbReference type="HOGENOM" id="CLU_064548_3_1_6"/>
<dbReference type="OrthoDB" id="9805609at2"/>
<dbReference type="Proteomes" id="UP000002587">
    <property type="component" value="Chromosome"/>
</dbReference>
<dbReference type="GO" id="GO:0022625">
    <property type="term" value="C:cytosolic large ribosomal subunit"/>
    <property type="evidence" value="ECO:0007669"/>
    <property type="project" value="TreeGrafter"/>
</dbReference>
<dbReference type="GO" id="GO:0003735">
    <property type="term" value="F:structural constituent of ribosome"/>
    <property type="evidence" value="ECO:0007669"/>
    <property type="project" value="InterPro"/>
</dbReference>
<dbReference type="GO" id="GO:0006412">
    <property type="term" value="P:translation"/>
    <property type="evidence" value="ECO:0007669"/>
    <property type="project" value="UniProtKB-UniRule"/>
</dbReference>
<dbReference type="FunFam" id="2.30.170.40:FF:000001">
    <property type="entry name" value="50S ribosomal protein L28"/>
    <property type="match status" value="1"/>
</dbReference>
<dbReference type="Gene3D" id="2.30.170.40">
    <property type="entry name" value="Ribosomal protein L28/L24"/>
    <property type="match status" value="1"/>
</dbReference>
<dbReference type="HAMAP" id="MF_00373">
    <property type="entry name" value="Ribosomal_bL28"/>
    <property type="match status" value="1"/>
</dbReference>
<dbReference type="InterPro" id="IPR026569">
    <property type="entry name" value="Ribosomal_bL28"/>
</dbReference>
<dbReference type="InterPro" id="IPR034704">
    <property type="entry name" value="Ribosomal_bL28/bL31-like_sf"/>
</dbReference>
<dbReference type="InterPro" id="IPR001383">
    <property type="entry name" value="Ribosomal_bL28_bact-type"/>
</dbReference>
<dbReference type="InterPro" id="IPR037147">
    <property type="entry name" value="Ribosomal_bL28_sf"/>
</dbReference>
<dbReference type="NCBIfam" id="TIGR00009">
    <property type="entry name" value="L28"/>
    <property type="match status" value="1"/>
</dbReference>
<dbReference type="PANTHER" id="PTHR13528">
    <property type="entry name" value="39S RIBOSOMAL PROTEIN L28, MITOCHONDRIAL"/>
    <property type="match status" value="1"/>
</dbReference>
<dbReference type="PANTHER" id="PTHR13528:SF2">
    <property type="entry name" value="LARGE RIBOSOMAL SUBUNIT PROTEIN BL28M"/>
    <property type="match status" value="1"/>
</dbReference>
<dbReference type="Pfam" id="PF00830">
    <property type="entry name" value="Ribosomal_L28"/>
    <property type="match status" value="1"/>
</dbReference>
<dbReference type="SUPFAM" id="SSF143800">
    <property type="entry name" value="L28p-like"/>
    <property type="match status" value="1"/>
</dbReference>
<feature type="chain" id="PRO_1000007341" description="Large ribosomal subunit protein bL28">
    <location>
        <begin position="1"/>
        <end position="78"/>
    </location>
</feature>
<sequence length="78" mass="9054">MAKVCVVTGKRPISGNNVSHANNRTRRRFYPNLHTHRFWVENENRFVKLKLSAKGLRIIDKKGIDTVLAKIRIRGEKV</sequence>
<name>RL28_RUTMC</name>
<keyword id="KW-0687">Ribonucleoprotein</keyword>
<keyword id="KW-0689">Ribosomal protein</keyword>
<proteinExistence type="inferred from homology"/>
<reference key="1">
    <citation type="journal article" date="2007" name="Science">
        <title>The Calyptogena magnifica chemoautotrophic symbiont genome.</title>
        <authorList>
            <person name="Newton I.L.G."/>
            <person name="Woyke T."/>
            <person name="Auchtung T.A."/>
            <person name="Dilly G.F."/>
            <person name="Dutton R.J."/>
            <person name="Fisher M.C."/>
            <person name="Fontanez K.M."/>
            <person name="Lau E."/>
            <person name="Stewart F.J."/>
            <person name="Richardson P.M."/>
            <person name="Barry K.W."/>
            <person name="Saunders E."/>
            <person name="Detter J.C."/>
            <person name="Wu D."/>
            <person name="Eisen J.A."/>
            <person name="Cavanaugh C.M."/>
        </authorList>
    </citation>
    <scope>NUCLEOTIDE SEQUENCE [LARGE SCALE GENOMIC DNA]</scope>
</reference>
<gene>
    <name evidence="1" type="primary">rpmB</name>
    <name type="ordered locus">Rmag_0994</name>
</gene>
<protein>
    <recommendedName>
        <fullName evidence="1">Large ribosomal subunit protein bL28</fullName>
    </recommendedName>
    <alternativeName>
        <fullName evidence="2">50S ribosomal protein L28</fullName>
    </alternativeName>
</protein>
<accession>A1AXP3</accession>
<organism>
    <name type="scientific">Ruthia magnifica subsp. Calyptogena magnifica</name>
    <dbReference type="NCBI Taxonomy" id="413404"/>
    <lineage>
        <taxon>Bacteria</taxon>
        <taxon>Pseudomonadati</taxon>
        <taxon>Pseudomonadota</taxon>
        <taxon>Gammaproteobacteria</taxon>
        <taxon>Candidatus Pseudothioglobaceae</taxon>
        <taxon>Candidatus Ruthturnera</taxon>
    </lineage>
</organism>
<evidence type="ECO:0000255" key="1">
    <source>
        <dbReference type="HAMAP-Rule" id="MF_00373"/>
    </source>
</evidence>
<evidence type="ECO:0000305" key="2"/>
<comment type="similarity">
    <text evidence="1">Belongs to the bacterial ribosomal protein bL28 family.</text>
</comment>